<evidence type="ECO:0000255" key="1">
    <source>
        <dbReference type="HAMAP-Rule" id="MF_00358"/>
    </source>
</evidence>
<evidence type="ECO:0000256" key="2">
    <source>
        <dbReference type="SAM" id="MobiDB-lite"/>
    </source>
</evidence>
<evidence type="ECO:0000305" key="3"/>
<comment type="similarity">
    <text evidence="1">Belongs to the bacterial ribosomal protein bS21 family.</text>
</comment>
<accession>Q5WHF1</accession>
<protein>
    <recommendedName>
        <fullName evidence="1">Small ribosomal subunit protein bS21</fullName>
    </recommendedName>
    <alternativeName>
        <fullName evidence="3">30S ribosomal protein S21</fullName>
    </alternativeName>
</protein>
<proteinExistence type="inferred from homology"/>
<name>RS21_SHOC1</name>
<gene>
    <name evidence="1" type="primary">rpsU</name>
    <name type="ordered locus">ABC1669</name>
</gene>
<dbReference type="EMBL" id="AP006627">
    <property type="protein sequence ID" value="BAD64204.1"/>
    <property type="molecule type" value="Genomic_DNA"/>
</dbReference>
<dbReference type="RefSeq" id="WP_011246513.1">
    <property type="nucleotide sequence ID" value="NC_006582.1"/>
</dbReference>
<dbReference type="SMR" id="Q5WHF1"/>
<dbReference type="STRING" id="66692.ABC1669"/>
<dbReference type="GeneID" id="86925758"/>
<dbReference type="KEGG" id="bcl:ABC1669"/>
<dbReference type="eggNOG" id="COG0828">
    <property type="taxonomic scope" value="Bacteria"/>
</dbReference>
<dbReference type="HOGENOM" id="CLU_159258_3_2_9"/>
<dbReference type="OrthoDB" id="9799244at2"/>
<dbReference type="Proteomes" id="UP000001168">
    <property type="component" value="Chromosome"/>
</dbReference>
<dbReference type="GO" id="GO:1990904">
    <property type="term" value="C:ribonucleoprotein complex"/>
    <property type="evidence" value="ECO:0007669"/>
    <property type="project" value="UniProtKB-KW"/>
</dbReference>
<dbReference type="GO" id="GO:0005840">
    <property type="term" value="C:ribosome"/>
    <property type="evidence" value="ECO:0007669"/>
    <property type="project" value="UniProtKB-KW"/>
</dbReference>
<dbReference type="GO" id="GO:0003735">
    <property type="term" value="F:structural constituent of ribosome"/>
    <property type="evidence" value="ECO:0007669"/>
    <property type="project" value="InterPro"/>
</dbReference>
<dbReference type="GO" id="GO:0006412">
    <property type="term" value="P:translation"/>
    <property type="evidence" value="ECO:0007669"/>
    <property type="project" value="UniProtKB-UniRule"/>
</dbReference>
<dbReference type="Gene3D" id="1.20.5.1150">
    <property type="entry name" value="Ribosomal protein S8"/>
    <property type="match status" value="1"/>
</dbReference>
<dbReference type="HAMAP" id="MF_00358">
    <property type="entry name" value="Ribosomal_bS21"/>
    <property type="match status" value="1"/>
</dbReference>
<dbReference type="InterPro" id="IPR001911">
    <property type="entry name" value="Ribosomal_bS21"/>
</dbReference>
<dbReference type="InterPro" id="IPR018278">
    <property type="entry name" value="Ribosomal_bS21_CS"/>
</dbReference>
<dbReference type="InterPro" id="IPR038380">
    <property type="entry name" value="Ribosomal_bS21_sf"/>
</dbReference>
<dbReference type="NCBIfam" id="TIGR00030">
    <property type="entry name" value="S21p"/>
    <property type="match status" value="1"/>
</dbReference>
<dbReference type="PANTHER" id="PTHR21109">
    <property type="entry name" value="MITOCHONDRIAL 28S RIBOSOMAL PROTEIN S21"/>
    <property type="match status" value="1"/>
</dbReference>
<dbReference type="PANTHER" id="PTHR21109:SF22">
    <property type="entry name" value="SMALL RIBOSOMAL SUBUNIT PROTEIN BS21"/>
    <property type="match status" value="1"/>
</dbReference>
<dbReference type="Pfam" id="PF01165">
    <property type="entry name" value="Ribosomal_S21"/>
    <property type="match status" value="1"/>
</dbReference>
<dbReference type="PRINTS" id="PR00976">
    <property type="entry name" value="RIBOSOMALS21"/>
</dbReference>
<dbReference type="PROSITE" id="PS01181">
    <property type="entry name" value="RIBOSOMAL_S21"/>
    <property type="match status" value="1"/>
</dbReference>
<reference key="1">
    <citation type="submission" date="2003-10" db="EMBL/GenBank/DDBJ databases">
        <title>The complete genome sequence of the alkaliphilic Bacillus clausii KSM-K16.</title>
        <authorList>
            <person name="Takaki Y."/>
            <person name="Kageyama Y."/>
            <person name="Shimamura S."/>
            <person name="Suzuki H."/>
            <person name="Nishi S."/>
            <person name="Hatada Y."/>
            <person name="Kawai S."/>
            <person name="Ito S."/>
            <person name="Horikoshi K."/>
        </authorList>
    </citation>
    <scope>NUCLEOTIDE SEQUENCE [LARGE SCALE GENOMIC DNA]</scope>
    <source>
        <strain>KSM-K16</strain>
    </source>
</reference>
<organism>
    <name type="scientific">Shouchella clausii (strain KSM-K16)</name>
    <name type="common">Alkalihalobacillus clausii</name>
    <dbReference type="NCBI Taxonomy" id="66692"/>
    <lineage>
        <taxon>Bacteria</taxon>
        <taxon>Bacillati</taxon>
        <taxon>Bacillota</taxon>
        <taxon>Bacilli</taxon>
        <taxon>Bacillales</taxon>
        <taxon>Bacillaceae</taxon>
        <taxon>Shouchella</taxon>
    </lineage>
</organism>
<feature type="chain" id="PRO_0000178299" description="Small ribosomal subunit protein bS21">
    <location>
        <begin position="1"/>
        <end position="57"/>
    </location>
</feature>
<feature type="region of interest" description="Disordered" evidence="2">
    <location>
        <begin position="32"/>
        <end position="57"/>
    </location>
</feature>
<feature type="compositionally biased region" description="Basic residues" evidence="2">
    <location>
        <begin position="33"/>
        <end position="57"/>
    </location>
</feature>
<sequence>MAETRVRKNESIDAALRRFKRSLSKEGTLAEVRKRKHFEKPSVKRKKKSEAARKRKF</sequence>
<keyword id="KW-1185">Reference proteome</keyword>
<keyword id="KW-0687">Ribonucleoprotein</keyword>
<keyword id="KW-0689">Ribosomal protein</keyword>